<organism>
    <name type="scientific">Escherichia coli O139:H28 (strain E24377A / ETEC)</name>
    <dbReference type="NCBI Taxonomy" id="331111"/>
    <lineage>
        <taxon>Bacteria</taxon>
        <taxon>Pseudomonadati</taxon>
        <taxon>Pseudomonadota</taxon>
        <taxon>Gammaproteobacteria</taxon>
        <taxon>Enterobacterales</taxon>
        <taxon>Enterobacteriaceae</taxon>
        <taxon>Escherichia</taxon>
    </lineage>
</organism>
<sequence>MKVNDRVTVKTDGGPRRPGVVLAVEEFSEGTMYLVSLEDYPLGIWFFNEAGHQDGIFVEKAE</sequence>
<gene>
    <name evidence="1" type="primary">dsrB</name>
    <name type="ordered locus">EcE24377A_2185</name>
</gene>
<evidence type="ECO:0000255" key="1">
    <source>
        <dbReference type="HAMAP-Rule" id="MF_01549"/>
    </source>
</evidence>
<reference key="1">
    <citation type="journal article" date="2008" name="J. Bacteriol.">
        <title>The pangenome structure of Escherichia coli: comparative genomic analysis of E. coli commensal and pathogenic isolates.</title>
        <authorList>
            <person name="Rasko D.A."/>
            <person name="Rosovitz M.J."/>
            <person name="Myers G.S.A."/>
            <person name="Mongodin E.F."/>
            <person name="Fricke W.F."/>
            <person name="Gajer P."/>
            <person name="Crabtree J."/>
            <person name="Sebaihia M."/>
            <person name="Thomson N.R."/>
            <person name="Chaudhuri R."/>
            <person name="Henderson I.R."/>
            <person name="Sperandio V."/>
            <person name="Ravel J."/>
        </authorList>
    </citation>
    <scope>NUCLEOTIDE SEQUENCE [LARGE SCALE GENOMIC DNA]</scope>
    <source>
        <strain>E24377A / ETEC</strain>
    </source>
</reference>
<protein>
    <recommendedName>
        <fullName evidence="1">Protein DsrB</fullName>
    </recommendedName>
</protein>
<comment type="similarity">
    <text evidence="1">Belongs to the DsrB family.</text>
</comment>
<accession>A7ZN75</accession>
<name>DSRB_ECO24</name>
<feature type="chain" id="PRO_1000068816" description="Protein DsrB">
    <location>
        <begin position="1"/>
        <end position="62"/>
    </location>
</feature>
<dbReference type="EMBL" id="CP000800">
    <property type="protein sequence ID" value="ABV18090.1"/>
    <property type="molecule type" value="Genomic_DNA"/>
</dbReference>
<dbReference type="RefSeq" id="WP_000867217.1">
    <property type="nucleotide sequence ID" value="NC_009801.1"/>
</dbReference>
<dbReference type="SMR" id="A7ZN75"/>
<dbReference type="GeneID" id="93775233"/>
<dbReference type="KEGG" id="ecw:EcE24377A_2185"/>
<dbReference type="HOGENOM" id="CLU_189289_0_0_6"/>
<dbReference type="Proteomes" id="UP000001122">
    <property type="component" value="Chromosome"/>
</dbReference>
<dbReference type="HAMAP" id="MF_01549">
    <property type="entry name" value="DsrB"/>
    <property type="match status" value="1"/>
</dbReference>
<dbReference type="InterPro" id="IPR019717">
    <property type="entry name" value="Dextransucrase_DSRB"/>
</dbReference>
<dbReference type="NCBIfam" id="NF007981">
    <property type="entry name" value="PRK10708.1"/>
    <property type="match status" value="1"/>
</dbReference>
<dbReference type="Pfam" id="PF10781">
    <property type="entry name" value="DSRB"/>
    <property type="match status" value="1"/>
</dbReference>
<proteinExistence type="inferred from homology"/>
<keyword id="KW-1185">Reference proteome</keyword>